<gene>
    <name type="primary">glpF</name>
    <name type="ordered locus">MYCGA0140</name>
    <name type="ORF">MGA_0641</name>
</gene>
<evidence type="ECO:0000250" key="1">
    <source>
        <dbReference type="UniProtKB" id="P0AER0"/>
    </source>
</evidence>
<evidence type="ECO:0000255" key="2"/>
<evidence type="ECO:0000305" key="3"/>
<sequence length="243" mass="26194">MNTTVNILLGELIGTMVLIILGNGVCASVNYKNMFAKQVGANWLLIALGWGFAVFCGVVISIQVLKGNANLNPAVTVYFMINQKGANIGLLFAMIAMQLLGAMIAQIILNSLNWKHIIENDAEMLKASSCTGPSHRKAWFRNISYEMLGTMILLAGVMAGDYHKLTGVFFVMAIVMSLGSVTGCAINPARDFGPRVIYFLTAKAFNKKLQNPVSADFRYGLVPLLAPIAAGLIMGGFSLLINQ</sequence>
<keyword id="KW-1003">Cell membrane</keyword>
<keyword id="KW-0472">Membrane</keyword>
<keyword id="KW-1185">Reference proteome</keyword>
<keyword id="KW-0677">Repeat</keyword>
<keyword id="KW-0812">Transmembrane</keyword>
<keyword id="KW-1133">Transmembrane helix</keyword>
<keyword id="KW-0813">Transport</keyword>
<name>GLPF_MYCGA</name>
<proteinExistence type="inferred from homology"/>
<organism>
    <name type="scientific">Mycoplasmoides gallisepticum (strain R(low / passage 15 / clone 2))</name>
    <name type="common">Mycoplasma gallisepticum</name>
    <dbReference type="NCBI Taxonomy" id="710127"/>
    <lineage>
        <taxon>Bacteria</taxon>
        <taxon>Bacillati</taxon>
        <taxon>Mycoplasmatota</taxon>
        <taxon>Mycoplasmoidales</taxon>
        <taxon>Mycoplasmoidaceae</taxon>
        <taxon>Mycoplasmoides</taxon>
    </lineage>
</organism>
<dbReference type="EMBL" id="U35010">
    <property type="protein sequence ID" value="AAA79047.1"/>
    <property type="molecule type" value="Genomic_DNA"/>
</dbReference>
<dbReference type="EMBL" id="AE015450">
    <property type="protein sequence ID" value="AAP56364.2"/>
    <property type="molecule type" value="Genomic_DNA"/>
</dbReference>
<dbReference type="RefSeq" id="WP_011113243.1">
    <property type="nucleotide sequence ID" value="NC_004829.2"/>
</dbReference>
<dbReference type="SMR" id="P52280"/>
<dbReference type="TCDB" id="1.A.8.2.3">
    <property type="family name" value="the major intrinsic protein (mip) family"/>
</dbReference>
<dbReference type="KEGG" id="mga:MGA_0641"/>
<dbReference type="PATRIC" id="fig|233150.7.peg.16"/>
<dbReference type="HOGENOM" id="CLU_020019_9_2_14"/>
<dbReference type="OrthoDB" id="9807293at2"/>
<dbReference type="Proteomes" id="UP000001418">
    <property type="component" value="Chromosome"/>
</dbReference>
<dbReference type="GO" id="GO:0005886">
    <property type="term" value="C:plasma membrane"/>
    <property type="evidence" value="ECO:0007669"/>
    <property type="project" value="UniProtKB-SubCell"/>
</dbReference>
<dbReference type="GO" id="GO:0015254">
    <property type="term" value="F:glycerol channel activity"/>
    <property type="evidence" value="ECO:0007669"/>
    <property type="project" value="TreeGrafter"/>
</dbReference>
<dbReference type="Gene3D" id="1.20.1080.10">
    <property type="entry name" value="Glycerol uptake facilitator protein"/>
    <property type="match status" value="1"/>
</dbReference>
<dbReference type="InterPro" id="IPR023271">
    <property type="entry name" value="Aquaporin-like"/>
</dbReference>
<dbReference type="InterPro" id="IPR000425">
    <property type="entry name" value="MIP"/>
</dbReference>
<dbReference type="InterPro" id="IPR050363">
    <property type="entry name" value="MIP/Aquaporin"/>
</dbReference>
<dbReference type="InterPro" id="IPR022357">
    <property type="entry name" value="MIP_CS"/>
</dbReference>
<dbReference type="PANTHER" id="PTHR43829">
    <property type="entry name" value="AQUAPORIN OR AQUAGLYCEROPORIN RELATED"/>
    <property type="match status" value="1"/>
</dbReference>
<dbReference type="PANTHER" id="PTHR43829:SF9">
    <property type="entry name" value="AQUAPORIN-9"/>
    <property type="match status" value="1"/>
</dbReference>
<dbReference type="Pfam" id="PF00230">
    <property type="entry name" value="MIP"/>
    <property type="match status" value="1"/>
</dbReference>
<dbReference type="PRINTS" id="PR00783">
    <property type="entry name" value="MINTRINSICP"/>
</dbReference>
<dbReference type="SUPFAM" id="SSF81338">
    <property type="entry name" value="Aquaporin-like"/>
    <property type="match status" value="1"/>
</dbReference>
<dbReference type="PROSITE" id="PS00221">
    <property type="entry name" value="MIP"/>
    <property type="match status" value="1"/>
</dbReference>
<feature type="chain" id="PRO_0000064086" description="Probable glycerol uptake facilitator protein">
    <location>
        <begin position="1"/>
        <end position="243"/>
    </location>
</feature>
<feature type="transmembrane region" description="Helical" evidence="2">
    <location>
        <begin position="7"/>
        <end position="27"/>
    </location>
</feature>
<feature type="transmembrane region" description="Helical" evidence="2">
    <location>
        <begin position="44"/>
        <end position="64"/>
    </location>
</feature>
<feature type="transmembrane region" description="Helical" evidence="2">
    <location>
        <begin position="88"/>
        <end position="108"/>
    </location>
</feature>
<feature type="transmembrane region" description="Helical" evidence="2">
    <location>
        <begin position="143"/>
        <end position="163"/>
    </location>
</feature>
<feature type="transmembrane region" description="Helical" evidence="2">
    <location>
        <begin position="166"/>
        <end position="186"/>
    </location>
</feature>
<feature type="transmembrane region" description="Helical" evidence="2">
    <location>
        <begin position="221"/>
        <end position="241"/>
    </location>
</feature>
<feature type="short sequence motif" description="NPA 1" evidence="3">
    <location>
        <begin position="72"/>
        <end position="74"/>
    </location>
</feature>
<feature type="short sequence motif" description="NPA 2" evidence="3">
    <location>
        <begin position="187"/>
        <end position="189"/>
    </location>
</feature>
<feature type="sequence conflict" description="In Ref. 1; AAA79047." evidence="3" ref="1">
    <original>S</original>
    <variation>C</variation>
    <location>
        <position position="28"/>
    </location>
</feature>
<feature type="sequence conflict" description="In Ref. 1; AAA79047." evidence="3" ref="1">
    <original>K</original>
    <variation>E</variation>
    <location>
        <position position="32"/>
    </location>
</feature>
<feature type="sequence conflict" description="In Ref. 1; AAA79047." evidence="3" ref="1">
    <original>L</original>
    <variation>F</variation>
    <location>
        <position position="48"/>
    </location>
</feature>
<feature type="sequence conflict" description="In Ref. 1; AAA79047." evidence="3" ref="1">
    <original>N</original>
    <variation>H</variation>
    <location>
        <position position="70"/>
    </location>
</feature>
<feature type="sequence conflict" description="In Ref. 1; AAA79047." evidence="3" ref="1">
    <original>AFNKKLQNPVSADFRYGLVPLLAPIAAGLIMGGFSLLINQ</original>
    <variation>VV</variation>
    <location>
        <begin position="204"/>
        <end position="243"/>
    </location>
</feature>
<reference key="1">
    <citation type="submission" date="1995-10" db="EMBL/GenBank/DDBJ databases">
        <title>Gene encoding a gycerol uptake protein from Mycoplasma gallisepticum, strain S6.</title>
        <authorList>
            <person name="Forsyth M.H."/>
            <person name="Saoud S."/>
            <person name="Geary S.J."/>
        </authorList>
    </citation>
    <scope>NUCLEOTIDE SEQUENCE [GENOMIC DNA]</scope>
    <source>
        <strain>S6</strain>
    </source>
</reference>
<reference key="2">
    <citation type="journal article" date="2003" name="Microbiology">
        <title>The complete genome sequence of the avian pathogen Mycoplasma gallisepticum strain R(low).</title>
        <authorList>
            <person name="Papazisi L."/>
            <person name="Gorton T.S."/>
            <person name="Kutish G."/>
            <person name="Markham P.F."/>
            <person name="Browning G.F."/>
            <person name="Nguyen D.K."/>
            <person name="Swartzell S."/>
            <person name="Madan A."/>
            <person name="Mahairas G."/>
            <person name="Geary S.J."/>
        </authorList>
    </citation>
    <scope>NUCLEOTIDE SEQUENCE [LARGE SCALE GENOMIC DNA]</scope>
    <source>
        <strain>R(low / passage 15 / clone 2)</strain>
    </source>
</reference>
<comment type="function">
    <text evidence="1">Mediates glycerol diffusion across the cytoplasmic membrane via a pore-type mechanism.</text>
</comment>
<comment type="catalytic activity">
    <reaction evidence="1">
        <text>glycerol(in) = glycerol(out)</text>
        <dbReference type="Rhea" id="RHEA:29675"/>
        <dbReference type="ChEBI" id="CHEBI:17754"/>
    </reaction>
</comment>
<comment type="subcellular location">
    <subcellularLocation>
        <location evidence="3">Cell membrane</location>
        <topology evidence="2">Multi-pass membrane protein</topology>
    </subcellularLocation>
</comment>
<comment type="domain">
    <text evidence="3">Aquaporins contain two tandem repeats each containing three membrane-spanning domains and a pore-forming loop with the signature motif Asn-Pro-Ala (NPA).</text>
</comment>
<comment type="similarity">
    <text evidence="3">Belongs to the MIP/aquaporin (TC 1.A.8) family.</text>
</comment>
<accession>P52280</accession>
<protein>
    <recommendedName>
        <fullName evidence="1">Probable glycerol uptake facilitator protein</fullName>
    </recommendedName>
</protein>